<name>TRMA_YERPN</name>
<comment type="function">
    <text evidence="1">Dual-specificity methyltransferase that catalyzes the formation of 5-methyluridine at position 54 (m5U54) in all tRNAs, and that of position 341 (m5U341) in tmRNA (transfer-mRNA).</text>
</comment>
<comment type="catalytic activity">
    <reaction evidence="1">
        <text>uridine(54) in tRNA + S-adenosyl-L-methionine = 5-methyluridine(54) in tRNA + S-adenosyl-L-homocysteine + H(+)</text>
        <dbReference type="Rhea" id="RHEA:42712"/>
        <dbReference type="Rhea" id="RHEA-COMP:10167"/>
        <dbReference type="Rhea" id="RHEA-COMP:10193"/>
        <dbReference type="ChEBI" id="CHEBI:15378"/>
        <dbReference type="ChEBI" id="CHEBI:57856"/>
        <dbReference type="ChEBI" id="CHEBI:59789"/>
        <dbReference type="ChEBI" id="CHEBI:65315"/>
        <dbReference type="ChEBI" id="CHEBI:74447"/>
        <dbReference type="EC" id="2.1.1.35"/>
    </reaction>
</comment>
<comment type="catalytic activity">
    <reaction evidence="1">
        <text>uridine(341) in tmRNA + S-adenosyl-L-methionine = 5-methyluridine(341) in tmRNA + S-adenosyl-L-homocysteine + H(+)</text>
        <dbReference type="Rhea" id="RHEA:43612"/>
        <dbReference type="Rhea" id="RHEA-COMP:10630"/>
        <dbReference type="Rhea" id="RHEA-COMP:10631"/>
        <dbReference type="ChEBI" id="CHEBI:15378"/>
        <dbReference type="ChEBI" id="CHEBI:57856"/>
        <dbReference type="ChEBI" id="CHEBI:59789"/>
        <dbReference type="ChEBI" id="CHEBI:65315"/>
        <dbReference type="ChEBI" id="CHEBI:74447"/>
    </reaction>
</comment>
<comment type="similarity">
    <text evidence="1">Belongs to the class I-like SAM-binding methyltransferase superfamily. RNA M5U methyltransferase family. TrmA subfamily.</text>
</comment>
<reference key="1">
    <citation type="journal article" date="2006" name="J. Bacteriol.">
        <title>Complete genome sequence of Yersinia pestis strains Antiqua and Nepal516: evidence of gene reduction in an emerging pathogen.</title>
        <authorList>
            <person name="Chain P.S.G."/>
            <person name="Hu P."/>
            <person name="Malfatti S.A."/>
            <person name="Radnedge L."/>
            <person name="Larimer F."/>
            <person name="Vergez L.M."/>
            <person name="Worsham P."/>
            <person name="Chu M.C."/>
            <person name="Andersen G.L."/>
        </authorList>
    </citation>
    <scope>NUCLEOTIDE SEQUENCE [LARGE SCALE GENOMIC DNA]</scope>
    <source>
        <strain>Nepal516</strain>
    </source>
</reference>
<reference key="2">
    <citation type="submission" date="2009-04" db="EMBL/GenBank/DDBJ databases">
        <title>Yersinia pestis Nepal516A whole genome shotgun sequencing project.</title>
        <authorList>
            <person name="Plunkett G. III"/>
            <person name="Anderson B.D."/>
            <person name="Baumler D.J."/>
            <person name="Burland V."/>
            <person name="Cabot E.L."/>
            <person name="Glasner J.D."/>
            <person name="Mau B."/>
            <person name="Neeno-Eckwall E."/>
            <person name="Perna N.T."/>
            <person name="Munk A.C."/>
            <person name="Tapia R."/>
            <person name="Green L.D."/>
            <person name="Rogers Y.C."/>
            <person name="Detter J.C."/>
            <person name="Bruce D.C."/>
            <person name="Brettin T.S."/>
        </authorList>
    </citation>
    <scope>NUCLEOTIDE SEQUENCE [LARGE SCALE GENOMIC DNA]</scope>
    <source>
        <strain>Nepal516</strain>
    </source>
</reference>
<evidence type="ECO:0000255" key="1">
    <source>
        <dbReference type="HAMAP-Rule" id="MF_01011"/>
    </source>
</evidence>
<protein>
    <recommendedName>
        <fullName evidence="1">tRNA/tmRNA (uracil-C(5))-methyltransferase</fullName>
        <ecNumber evidence="1">2.1.1.-</ecNumber>
        <ecNumber evidence="1">2.1.1.35</ecNumber>
    </recommendedName>
    <alternativeName>
        <fullName evidence="1">tRNA (uracil(54)-C(5))-methyltransferase</fullName>
    </alternativeName>
    <alternativeName>
        <fullName evidence="1">tRNA(m5U54)-methyltransferase</fullName>
        <shortName evidence="1">RUMT</shortName>
    </alternativeName>
    <alternativeName>
        <fullName evidence="1">tmRNA (uracil(341)-C(5))-methyltransferase</fullName>
    </alternativeName>
</protein>
<sequence length="367" mass="42413">MTPNILPIESYDHQLAEKSARLKAMMLPFQAPEPEIFRSPADHYRMRAEFRVWHDEDDLYHIMFDQQTKQRIRVEQFPVASRLINRLMDALMTAIRAEPLLRRKLFQIDYLSTLSGKLIASLLYHRQLDEEWQQKALELRDQLRAQGFDLQLIGRAAKTKIMLDHDYIDEVLPVAGREMIYRQVENSFTQPNAAVNIHMLEWALDVTQGATGDLLELYCGNGNFSLALARNFERVLATEIAKPSVAAAQYNIAANNIDNVQIIRMSAEEFTQAMQGVREFNRLKGIDLGSYNCETIFVDPPRSGLDHETVKLVQAYPRILYISCNPETLCANLEQLQHTHKISRLALFDQFPYTHHMECGVLLEKRH</sequence>
<organism>
    <name type="scientific">Yersinia pestis bv. Antiqua (strain Nepal516)</name>
    <dbReference type="NCBI Taxonomy" id="377628"/>
    <lineage>
        <taxon>Bacteria</taxon>
        <taxon>Pseudomonadati</taxon>
        <taxon>Pseudomonadota</taxon>
        <taxon>Gammaproteobacteria</taxon>
        <taxon>Enterobacterales</taxon>
        <taxon>Yersiniaceae</taxon>
        <taxon>Yersinia</taxon>
    </lineage>
</organism>
<accession>Q1CNP1</accession>
<accession>D1Q374</accession>
<proteinExistence type="inferred from homology"/>
<feature type="chain" id="PRO_0000281474" description="tRNA/tmRNA (uracil-C(5))-methyltransferase">
    <location>
        <begin position="1"/>
        <end position="367"/>
    </location>
</feature>
<feature type="active site" description="Nucleophile" evidence="1">
    <location>
        <position position="324"/>
    </location>
</feature>
<feature type="active site" description="Proton acceptor" evidence="1">
    <location>
        <position position="358"/>
    </location>
</feature>
<feature type="binding site" evidence="1">
    <location>
        <position position="190"/>
    </location>
    <ligand>
        <name>S-adenosyl-L-methionine</name>
        <dbReference type="ChEBI" id="CHEBI:59789"/>
    </ligand>
</feature>
<feature type="binding site" evidence="1">
    <location>
        <position position="218"/>
    </location>
    <ligand>
        <name>S-adenosyl-L-methionine</name>
        <dbReference type="ChEBI" id="CHEBI:59789"/>
    </ligand>
</feature>
<feature type="binding site" evidence="1">
    <location>
        <position position="223"/>
    </location>
    <ligand>
        <name>S-adenosyl-L-methionine</name>
        <dbReference type="ChEBI" id="CHEBI:59789"/>
    </ligand>
</feature>
<feature type="binding site" evidence="1">
    <location>
        <position position="239"/>
    </location>
    <ligand>
        <name>S-adenosyl-L-methionine</name>
        <dbReference type="ChEBI" id="CHEBI:59789"/>
    </ligand>
</feature>
<feature type="binding site" evidence="1">
    <location>
        <position position="299"/>
    </location>
    <ligand>
        <name>S-adenosyl-L-methionine</name>
        <dbReference type="ChEBI" id="CHEBI:59789"/>
    </ligand>
</feature>
<gene>
    <name evidence="1" type="primary">trmA</name>
    <name type="ordered locus">YPN_0056</name>
    <name type="ORF">YP516_4594</name>
</gene>
<dbReference type="EC" id="2.1.1.-" evidence="1"/>
<dbReference type="EC" id="2.1.1.35" evidence="1"/>
<dbReference type="EMBL" id="CP000305">
    <property type="protein sequence ID" value="ABG16389.1"/>
    <property type="molecule type" value="Genomic_DNA"/>
</dbReference>
<dbReference type="EMBL" id="ACNQ01000019">
    <property type="protein sequence ID" value="EEO74977.1"/>
    <property type="molecule type" value="Genomic_DNA"/>
</dbReference>
<dbReference type="RefSeq" id="WP_002209474.1">
    <property type="nucleotide sequence ID" value="NZ_ACNQ01000019.1"/>
</dbReference>
<dbReference type="SMR" id="Q1CNP1"/>
<dbReference type="GeneID" id="57974789"/>
<dbReference type="KEGG" id="ypn:YPN_0056"/>
<dbReference type="HOGENOM" id="CLU_043022_0_0_6"/>
<dbReference type="Proteomes" id="UP000008936">
    <property type="component" value="Chromosome"/>
</dbReference>
<dbReference type="GO" id="GO:0005829">
    <property type="term" value="C:cytosol"/>
    <property type="evidence" value="ECO:0007669"/>
    <property type="project" value="TreeGrafter"/>
</dbReference>
<dbReference type="GO" id="GO:0019843">
    <property type="term" value="F:rRNA binding"/>
    <property type="evidence" value="ECO:0007669"/>
    <property type="project" value="TreeGrafter"/>
</dbReference>
<dbReference type="GO" id="GO:0030697">
    <property type="term" value="F:tRNA (uracil(54)-C5)-methyltransferase activity, S-adenosyl methionine-dependent"/>
    <property type="evidence" value="ECO:0007669"/>
    <property type="project" value="UniProtKB-UniRule"/>
</dbReference>
<dbReference type="GO" id="GO:0000049">
    <property type="term" value="F:tRNA binding"/>
    <property type="evidence" value="ECO:0007669"/>
    <property type="project" value="TreeGrafter"/>
</dbReference>
<dbReference type="GO" id="GO:0030488">
    <property type="term" value="P:tRNA methylation"/>
    <property type="evidence" value="ECO:0007669"/>
    <property type="project" value="UniProtKB-UniRule"/>
</dbReference>
<dbReference type="CDD" id="cd02440">
    <property type="entry name" value="AdoMet_MTases"/>
    <property type="match status" value="1"/>
</dbReference>
<dbReference type="FunFam" id="2.40.50.1070:FF:000001">
    <property type="entry name" value="tRNA/tmRNA (uracil-C(5))-methyltransferase"/>
    <property type="match status" value="1"/>
</dbReference>
<dbReference type="FunFam" id="3.40.50.150:FF:000012">
    <property type="entry name" value="tRNA/tmRNA (uracil-C(5))-methyltransferase"/>
    <property type="match status" value="1"/>
</dbReference>
<dbReference type="Gene3D" id="2.40.50.1070">
    <property type="match status" value="1"/>
</dbReference>
<dbReference type="Gene3D" id="3.40.50.150">
    <property type="entry name" value="Vaccinia Virus protein VP39"/>
    <property type="match status" value="1"/>
</dbReference>
<dbReference type="HAMAP" id="MF_01011">
    <property type="entry name" value="RNA_methyltr_TrmA"/>
    <property type="match status" value="1"/>
</dbReference>
<dbReference type="InterPro" id="IPR030390">
    <property type="entry name" value="MeTrfase_TrmA_AS"/>
</dbReference>
<dbReference type="InterPro" id="IPR030391">
    <property type="entry name" value="MeTrfase_TrmA_CS"/>
</dbReference>
<dbReference type="InterPro" id="IPR029063">
    <property type="entry name" value="SAM-dependent_MTases_sf"/>
</dbReference>
<dbReference type="InterPro" id="IPR011869">
    <property type="entry name" value="TrmA_MeTrfase"/>
</dbReference>
<dbReference type="InterPro" id="IPR010280">
    <property type="entry name" value="U5_MeTrfase_fam"/>
</dbReference>
<dbReference type="NCBIfam" id="TIGR02143">
    <property type="entry name" value="trmA_only"/>
    <property type="match status" value="1"/>
</dbReference>
<dbReference type="PANTHER" id="PTHR47790">
    <property type="entry name" value="TRNA/TMRNA (URACIL-C(5))-METHYLTRANSFERASE"/>
    <property type="match status" value="1"/>
</dbReference>
<dbReference type="PANTHER" id="PTHR47790:SF2">
    <property type="entry name" value="TRNA_TMRNA (URACIL-C(5))-METHYLTRANSFERASE"/>
    <property type="match status" value="1"/>
</dbReference>
<dbReference type="Pfam" id="PF05958">
    <property type="entry name" value="tRNA_U5-meth_tr"/>
    <property type="match status" value="1"/>
</dbReference>
<dbReference type="SUPFAM" id="SSF53335">
    <property type="entry name" value="S-adenosyl-L-methionine-dependent methyltransferases"/>
    <property type="match status" value="1"/>
</dbReference>
<dbReference type="PROSITE" id="PS51687">
    <property type="entry name" value="SAM_MT_RNA_M5U"/>
    <property type="match status" value="1"/>
</dbReference>
<dbReference type="PROSITE" id="PS01230">
    <property type="entry name" value="TRMA_1"/>
    <property type="match status" value="1"/>
</dbReference>
<dbReference type="PROSITE" id="PS01231">
    <property type="entry name" value="TRMA_2"/>
    <property type="match status" value="1"/>
</dbReference>
<keyword id="KW-0489">Methyltransferase</keyword>
<keyword id="KW-0949">S-adenosyl-L-methionine</keyword>
<keyword id="KW-0808">Transferase</keyword>
<keyword id="KW-0819">tRNA processing</keyword>